<dbReference type="EC" id="6.1.1.18" evidence="1"/>
<dbReference type="EMBL" id="CP001396">
    <property type="protein sequence ID" value="ACR63343.1"/>
    <property type="molecule type" value="Genomic_DNA"/>
</dbReference>
<dbReference type="RefSeq" id="WP_001287154.1">
    <property type="nucleotide sequence ID" value="NC_012759.1"/>
</dbReference>
<dbReference type="SMR" id="C4ZWF6"/>
<dbReference type="GeneID" id="93776805"/>
<dbReference type="KEGG" id="ebw:BWG_0540"/>
<dbReference type="HOGENOM" id="CLU_001882_2_3_6"/>
<dbReference type="GO" id="GO:0005829">
    <property type="term" value="C:cytosol"/>
    <property type="evidence" value="ECO:0007669"/>
    <property type="project" value="TreeGrafter"/>
</dbReference>
<dbReference type="GO" id="GO:0005524">
    <property type="term" value="F:ATP binding"/>
    <property type="evidence" value="ECO:0007669"/>
    <property type="project" value="UniProtKB-UniRule"/>
</dbReference>
<dbReference type="GO" id="GO:0004819">
    <property type="term" value="F:glutamine-tRNA ligase activity"/>
    <property type="evidence" value="ECO:0007669"/>
    <property type="project" value="UniProtKB-UniRule"/>
</dbReference>
<dbReference type="GO" id="GO:0006425">
    <property type="term" value="P:glutaminyl-tRNA aminoacylation"/>
    <property type="evidence" value="ECO:0007669"/>
    <property type="project" value="InterPro"/>
</dbReference>
<dbReference type="GO" id="GO:0006424">
    <property type="term" value="P:glutamyl-tRNA aminoacylation"/>
    <property type="evidence" value="ECO:0007669"/>
    <property type="project" value="UniProtKB-UniRule"/>
</dbReference>
<dbReference type="CDD" id="cd00807">
    <property type="entry name" value="GlnRS_core"/>
    <property type="match status" value="1"/>
</dbReference>
<dbReference type="FunFam" id="1.10.1160.10:FF:000001">
    <property type="entry name" value="Glutamine--tRNA ligase"/>
    <property type="match status" value="1"/>
</dbReference>
<dbReference type="FunFam" id="2.40.240.10:FF:000001">
    <property type="entry name" value="Glutamine--tRNA ligase"/>
    <property type="match status" value="1"/>
</dbReference>
<dbReference type="FunFam" id="2.40.240.10:FF:000003">
    <property type="entry name" value="Glutamine--tRNA ligase"/>
    <property type="match status" value="1"/>
</dbReference>
<dbReference type="FunFam" id="3.90.800.10:FF:000001">
    <property type="entry name" value="Glutamine--tRNA ligase"/>
    <property type="match status" value="1"/>
</dbReference>
<dbReference type="FunFam" id="3.40.50.620:FF:000037">
    <property type="entry name" value="Glutamine--tRNA ligase cytoplasmic"/>
    <property type="match status" value="1"/>
</dbReference>
<dbReference type="Gene3D" id="1.10.1160.10">
    <property type="entry name" value="Glutamyl-trna Synthetase, Domain 2"/>
    <property type="match status" value="1"/>
</dbReference>
<dbReference type="Gene3D" id="3.90.800.10">
    <property type="entry name" value="Glutamyl-tRNA Synthetase, Domain 3"/>
    <property type="match status" value="1"/>
</dbReference>
<dbReference type="Gene3D" id="3.40.50.620">
    <property type="entry name" value="HUPs"/>
    <property type="match status" value="1"/>
</dbReference>
<dbReference type="Gene3D" id="2.40.240.10">
    <property type="entry name" value="Ribosomal Protein L25, Chain P"/>
    <property type="match status" value="2"/>
</dbReference>
<dbReference type="HAMAP" id="MF_00126">
    <property type="entry name" value="Gln_tRNA_synth"/>
    <property type="match status" value="1"/>
</dbReference>
<dbReference type="InterPro" id="IPR001412">
    <property type="entry name" value="aa-tRNA-synth_I_CS"/>
</dbReference>
<dbReference type="InterPro" id="IPR004514">
    <property type="entry name" value="Gln-tRNA-synth"/>
</dbReference>
<dbReference type="InterPro" id="IPR050132">
    <property type="entry name" value="Gln/Glu-tRNA_Ligase"/>
</dbReference>
<dbReference type="InterPro" id="IPR022861">
    <property type="entry name" value="Gln_tRNA_ligase_bac"/>
</dbReference>
<dbReference type="InterPro" id="IPR000924">
    <property type="entry name" value="Glu/Gln-tRNA-synth"/>
</dbReference>
<dbReference type="InterPro" id="IPR020058">
    <property type="entry name" value="Glu/Gln-tRNA-synth_Ib_cat-dom"/>
</dbReference>
<dbReference type="InterPro" id="IPR020059">
    <property type="entry name" value="Glu/Gln-tRNA-synth_Ib_codon-bd"/>
</dbReference>
<dbReference type="InterPro" id="IPR020061">
    <property type="entry name" value="Glu_tRNA_lig_a-bdl"/>
</dbReference>
<dbReference type="InterPro" id="IPR020056">
    <property type="entry name" value="Rbsml_bL25/Gln-tRNA_synth_N"/>
</dbReference>
<dbReference type="InterPro" id="IPR011035">
    <property type="entry name" value="Ribosomal_bL25/Gln-tRNA_synth"/>
</dbReference>
<dbReference type="InterPro" id="IPR014729">
    <property type="entry name" value="Rossmann-like_a/b/a_fold"/>
</dbReference>
<dbReference type="InterPro" id="IPR049437">
    <property type="entry name" value="tRNA-synt_1c_C2"/>
</dbReference>
<dbReference type="NCBIfam" id="TIGR00440">
    <property type="entry name" value="glnS"/>
    <property type="match status" value="1"/>
</dbReference>
<dbReference type="NCBIfam" id="NF011291">
    <property type="entry name" value="PRK14703.1"/>
    <property type="match status" value="1"/>
</dbReference>
<dbReference type="PANTHER" id="PTHR43097:SF5">
    <property type="entry name" value="GLUTAMATE--TRNA LIGASE"/>
    <property type="match status" value="1"/>
</dbReference>
<dbReference type="PANTHER" id="PTHR43097">
    <property type="entry name" value="GLUTAMINE-TRNA LIGASE"/>
    <property type="match status" value="1"/>
</dbReference>
<dbReference type="Pfam" id="PF00749">
    <property type="entry name" value="tRNA-synt_1c"/>
    <property type="match status" value="1"/>
</dbReference>
<dbReference type="Pfam" id="PF03950">
    <property type="entry name" value="tRNA-synt_1c_C"/>
    <property type="match status" value="1"/>
</dbReference>
<dbReference type="Pfam" id="PF20974">
    <property type="entry name" value="tRNA-synt_1c_C2"/>
    <property type="match status" value="1"/>
</dbReference>
<dbReference type="PRINTS" id="PR00987">
    <property type="entry name" value="TRNASYNTHGLU"/>
</dbReference>
<dbReference type="SUPFAM" id="SSF52374">
    <property type="entry name" value="Nucleotidylyl transferase"/>
    <property type="match status" value="1"/>
</dbReference>
<dbReference type="SUPFAM" id="SSF50715">
    <property type="entry name" value="Ribosomal protein L25-like"/>
    <property type="match status" value="1"/>
</dbReference>
<dbReference type="PROSITE" id="PS00178">
    <property type="entry name" value="AA_TRNA_LIGASE_I"/>
    <property type="match status" value="1"/>
</dbReference>
<gene>
    <name evidence="1" type="primary">glnS</name>
    <name type="ordered locus">BWG_0540</name>
</gene>
<feature type="chain" id="PRO_1000203121" description="Glutamine--tRNA ligase">
    <location>
        <begin position="1"/>
        <end position="554"/>
    </location>
</feature>
<feature type="region of interest" description="Interaction with tRNA" evidence="1">
    <location>
        <begin position="317"/>
        <end position="324"/>
    </location>
</feature>
<feature type="short sequence motif" description="'HIGH' region" evidence="1">
    <location>
        <begin position="34"/>
        <end position="44"/>
    </location>
</feature>
<feature type="short sequence motif" description="'KMSKS' region" evidence="1">
    <location>
        <begin position="268"/>
        <end position="272"/>
    </location>
</feature>
<feature type="binding site" evidence="1">
    <location>
        <begin position="35"/>
        <end position="37"/>
    </location>
    <ligand>
        <name>ATP</name>
        <dbReference type="ChEBI" id="CHEBI:30616"/>
    </ligand>
</feature>
<feature type="binding site" evidence="1">
    <location>
        <begin position="41"/>
        <end position="47"/>
    </location>
    <ligand>
        <name>ATP</name>
        <dbReference type="ChEBI" id="CHEBI:30616"/>
    </ligand>
</feature>
<feature type="binding site" evidence="1">
    <location>
        <position position="67"/>
    </location>
    <ligand>
        <name>L-glutamine</name>
        <dbReference type="ChEBI" id="CHEBI:58359"/>
    </ligand>
</feature>
<feature type="binding site" evidence="1">
    <location>
        <position position="212"/>
    </location>
    <ligand>
        <name>L-glutamine</name>
        <dbReference type="ChEBI" id="CHEBI:58359"/>
    </ligand>
</feature>
<feature type="binding site" evidence="1">
    <location>
        <position position="231"/>
    </location>
    <ligand>
        <name>ATP</name>
        <dbReference type="ChEBI" id="CHEBI:30616"/>
    </ligand>
</feature>
<feature type="binding site" evidence="1">
    <location>
        <begin position="261"/>
        <end position="262"/>
    </location>
    <ligand>
        <name>ATP</name>
        <dbReference type="ChEBI" id="CHEBI:30616"/>
    </ligand>
</feature>
<feature type="binding site" evidence="1">
    <location>
        <begin position="269"/>
        <end position="271"/>
    </location>
    <ligand>
        <name>ATP</name>
        <dbReference type="ChEBI" id="CHEBI:30616"/>
    </ligand>
</feature>
<protein>
    <recommendedName>
        <fullName evidence="1">Glutamine--tRNA ligase</fullName>
        <ecNumber evidence="1">6.1.1.18</ecNumber>
    </recommendedName>
    <alternativeName>
        <fullName evidence="1">Glutaminyl-tRNA synthetase</fullName>
        <shortName evidence="1">GlnRS</shortName>
    </alternativeName>
</protein>
<evidence type="ECO:0000255" key="1">
    <source>
        <dbReference type="HAMAP-Rule" id="MF_00126"/>
    </source>
</evidence>
<sequence length="554" mass="63478">MSEAEARPTNFIRQIIDEDLASGKHTTVHTRFPPEPNGYLHIGHAKSICLNFGIAQDYKGQCNLRFDDTNPVKEDIEYVESIKNDVEWLGFHWSGNVRYSSDYFDQLHAYAIELINKGLAYVDELTPEQIREYRGTLTQPGKNSPYRDRSVEENLALFEKMRAGGFEEGKACLRAKIDMASPFIVMRDPVLYRIKFAEHHQTGNKWCIYPMYDFTHCISDALEGITHSLCTLEFQDNRRLYDWVLDNITIPVHPRQYEFSRLNLEYTVMSKRKLNLLVTDKHVEGWDDPRMPTISGLRRRGYTAASIREFCKRIGVTKQDNTIEMASLESCIREDLNENAPRAMAVIDPVKLVIENYQGEGEMVTMPNHPNKPEMGSRQVPFSGEIWIDRADFREEANKQYKRLVLGKEVRLRNAYVIKAERVEKDAEGNITTIFCTYDADTLSKDPADGRKVKGVIHWVSAAHALPVEIRLYDRLFSVPNPGAADDFLSVINPESLVIKQGFAEPSLKDAVAGKAFQFEREGYFCLDSRHSTAEKPVFNRTVGLRDTWAKVGE</sequence>
<keyword id="KW-0030">Aminoacyl-tRNA synthetase</keyword>
<keyword id="KW-0067">ATP-binding</keyword>
<keyword id="KW-0963">Cytoplasm</keyword>
<keyword id="KW-0436">Ligase</keyword>
<keyword id="KW-0547">Nucleotide-binding</keyword>
<keyword id="KW-0648">Protein biosynthesis</keyword>
<name>SYQ_ECOBW</name>
<comment type="catalytic activity">
    <reaction evidence="1">
        <text>tRNA(Gln) + L-glutamine + ATP = L-glutaminyl-tRNA(Gln) + AMP + diphosphate</text>
        <dbReference type="Rhea" id="RHEA:20121"/>
        <dbReference type="Rhea" id="RHEA-COMP:9662"/>
        <dbReference type="Rhea" id="RHEA-COMP:9681"/>
        <dbReference type="ChEBI" id="CHEBI:30616"/>
        <dbReference type="ChEBI" id="CHEBI:33019"/>
        <dbReference type="ChEBI" id="CHEBI:58359"/>
        <dbReference type="ChEBI" id="CHEBI:78442"/>
        <dbReference type="ChEBI" id="CHEBI:78521"/>
        <dbReference type="ChEBI" id="CHEBI:456215"/>
        <dbReference type="EC" id="6.1.1.18"/>
    </reaction>
</comment>
<comment type="subunit">
    <text evidence="1">Monomer.</text>
</comment>
<comment type="subcellular location">
    <subcellularLocation>
        <location evidence="1">Cytoplasm</location>
    </subcellularLocation>
</comment>
<comment type="similarity">
    <text evidence="1">Belongs to the class-I aminoacyl-tRNA synthetase family.</text>
</comment>
<accession>C4ZWF6</accession>
<organism>
    <name type="scientific">Escherichia coli (strain K12 / MC4100 / BW2952)</name>
    <dbReference type="NCBI Taxonomy" id="595496"/>
    <lineage>
        <taxon>Bacteria</taxon>
        <taxon>Pseudomonadati</taxon>
        <taxon>Pseudomonadota</taxon>
        <taxon>Gammaproteobacteria</taxon>
        <taxon>Enterobacterales</taxon>
        <taxon>Enterobacteriaceae</taxon>
        <taxon>Escherichia</taxon>
    </lineage>
</organism>
<proteinExistence type="inferred from homology"/>
<reference key="1">
    <citation type="journal article" date="2009" name="J. Bacteriol.">
        <title>Genomic sequencing reveals regulatory mutations and recombinational events in the widely used MC4100 lineage of Escherichia coli K-12.</title>
        <authorList>
            <person name="Ferenci T."/>
            <person name="Zhou Z."/>
            <person name="Betteridge T."/>
            <person name="Ren Y."/>
            <person name="Liu Y."/>
            <person name="Feng L."/>
            <person name="Reeves P.R."/>
            <person name="Wang L."/>
        </authorList>
    </citation>
    <scope>NUCLEOTIDE SEQUENCE [LARGE SCALE GENOMIC DNA]</scope>
    <source>
        <strain>K12 / MC4100 / BW2952</strain>
    </source>
</reference>